<comment type="function">
    <text evidence="1">Cell wall formation.</text>
</comment>
<comment type="catalytic activity">
    <reaction evidence="1">
        <text>UDP-N-acetyl-alpha-D-muramate + L-alanine + ATP = UDP-N-acetyl-alpha-D-muramoyl-L-alanine + ADP + phosphate + H(+)</text>
        <dbReference type="Rhea" id="RHEA:23372"/>
        <dbReference type="ChEBI" id="CHEBI:15378"/>
        <dbReference type="ChEBI" id="CHEBI:30616"/>
        <dbReference type="ChEBI" id="CHEBI:43474"/>
        <dbReference type="ChEBI" id="CHEBI:57972"/>
        <dbReference type="ChEBI" id="CHEBI:70757"/>
        <dbReference type="ChEBI" id="CHEBI:83898"/>
        <dbReference type="ChEBI" id="CHEBI:456216"/>
        <dbReference type="EC" id="6.3.2.8"/>
    </reaction>
</comment>
<comment type="pathway">
    <text evidence="1">Cell wall biogenesis; peptidoglycan biosynthesis.</text>
</comment>
<comment type="subcellular location">
    <subcellularLocation>
        <location evidence="1">Cytoplasm</location>
    </subcellularLocation>
</comment>
<comment type="similarity">
    <text evidence="1">Belongs to the MurCDEF family.</text>
</comment>
<evidence type="ECO:0000255" key="1">
    <source>
        <dbReference type="HAMAP-Rule" id="MF_00046"/>
    </source>
</evidence>
<sequence>MKHKVKRIHFVGIGGAGMSGIAEVLANLGFMVSGSDLGENAATRRLAALGVQVRVGHAAENVAGADAVVISTAVRNDNPEVVAARSRHVPIVPRAQMLAELMRLKHGIAIAGTHGKTTTTSLVASILAEGGMDPTFVIGGKLNAAGANARLGKGDFLVAEADESDASFLLLTPVISVITNIDADHMDTYGHDFARLKQAFVDFLQHLPFYGVAVLCEDDPHVRSIMPLVSKQVVRYGLSESANIRAENVRAEGGRMLFDVVRTNGSVSRLPIELNLPGVHNVLNALAAIAVATEVQVPDAAIIKALAEFRGVGRRFQRYGEVALRDAEGTPQGSCTLIDDYGHHPVEMAATLAAARGAFPGRRLVLAFQPHRYTRTRDCFEDFVKVLSTVDALLLAEVYAAGEAPVVAADGRSLARAIRVAGKVEPVFVEDIDEMPATVLAAVRDGDVVITMGAGSIGAVPGKLASSEELV</sequence>
<organism>
    <name type="scientific">Aromatoleum aromaticum (strain DSM 19018 / LMG 30748 / EbN1)</name>
    <name type="common">Azoarcus sp. (strain EbN1)</name>
    <dbReference type="NCBI Taxonomy" id="76114"/>
    <lineage>
        <taxon>Bacteria</taxon>
        <taxon>Pseudomonadati</taxon>
        <taxon>Pseudomonadota</taxon>
        <taxon>Betaproteobacteria</taxon>
        <taxon>Rhodocyclales</taxon>
        <taxon>Rhodocyclaceae</taxon>
        <taxon>Aromatoleum</taxon>
    </lineage>
</organism>
<proteinExistence type="inferred from homology"/>
<feature type="chain" id="PRO_0000242542" description="UDP-N-acetylmuramate--L-alanine ligase">
    <location>
        <begin position="1"/>
        <end position="471"/>
    </location>
</feature>
<feature type="binding site" evidence="1">
    <location>
        <begin position="112"/>
        <end position="118"/>
    </location>
    <ligand>
        <name>ATP</name>
        <dbReference type="ChEBI" id="CHEBI:30616"/>
    </ligand>
</feature>
<protein>
    <recommendedName>
        <fullName evidence="1">UDP-N-acetylmuramate--L-alanine ligase</fullName>
        <ecNumber evidence="1">6.3.2.8</ecNumber>
    </recommendedName>
    <alternativeName>
        <fullName evidence="1">UDP-N-acetylmuramoyl-L-alanine synthetase</fullName>
    </alternativeName>
</protein>
<keyword id="KW-0067">ATP-binding</keyword>
<keyword id="KW-0131">Cell cycle</keyword>
<keyword id="KW-0132">Cell division</keyword>
<keyword id="KW-0133">Cell shape</keyword>
<keyword id="KW-0961">Cell wall biogenesis/degradation</keyword>
<keyword id="KW-0963">Cytoplasm</keyword>
<keyword id="KW-0436">Ligase</keyword>
<keyword id="KW-0547">Nucleotide-binding</keyword>
<keyword id="KW-0573">Peptidoglycan synthesis</keyword>
<keyword id="KW-1185">Reference proteome</keyword>
<name>MURC_AROAE</name>
<dbReference type="EC" id="6.3.2.8" evidence="1"/>
<dbReference type="EMBL" id="CR555306">
    <property type="protein sequence ID" value="CAI06914.1"/>
    <property type="molecule type" value="Genomic_DNA"/>
</dbReference>
<dbReference type="RefSeq" id="WP_011236642.1">
    <property type="nucleotide sequence ID" value="NC_006513.1"/>
</dbReference>
<dbReference type="SMR" id="Q5P6Z7"/>
<dbReference type="STRING" id="76114.ebA1443"/>
<dbReference type="KEGG" id="eba:ebA1443"/>
<dbReference type="eggNOG" id="COG0773">
    <property type="taxonomic scope" value="Bacteria"/>
</dbReference>
<dbReference type="HOGENOM" id="CLU_028104_2_2_4"/>
<dbReference type="OrthoDB" id="9804126at2"/>
<dbReference type="UniPathway" id="UPA00219"/>
<dbReference type="Proteomes" id="UP000006552">
    <property type="component" value="Chromosome"/>
</dbReference>
<dbReference type="GO" id="GO:0005737">
    <property type="term" value="C:cytoplasm"/>
    <property type="evidence" value="ECO:0007669"/>
    <property type="project" value="UniProtKB-SubCell"/>
</dbReference>
<dbReference type="GO" id="GO:0005524">
    <property type="term" value="F:ATP binding"/>
    <property type="evidence" value="ECO:0007669"/>
    <property type="project" value="UniProtKB-UniRule"/>
</dbReference>
<dbReference type="GO" id="GO:0008763">
    <property type="term" value="F:UDP-N-acetylmuramate-L-alanine ligase activity"/>
    <property type="evidence" value="ECO:0007669"/>
    <property type="project" value="UniProtKB-UniRule"/>
</dbReference>
<dbReference type="GO" id="GO:0051301">
    <property type="term" value="P:cell division"/>
    <property type="evidence" value="ECO:0007669"/>
    <property type="project" value="UniProtKB-KW"/>
</dbReference>
<dbReference type="GO" id="GO:0071555">
    <property type="term" value="P:cell wall organization"/>
    <property type="evidence" value="ECO:0007669"/>
    <property type="project" value="UniProtKB-KW"/>
</dbReference>
<dbReference type="GO" id="GO:0009252">
    <property type="term" value="P:peptidoglycan biosynthetic process"/>
    <property type="evidence" value="ECO:0007669"/>
    <property type="project" value="UniProtKB-UniRule"/>
</dbReference>
<dbReference type="GO" id="GO:0008360">
    <property type="term" value="P:regulation of cell shape"/>
    <property type="evidence" value="ECO:0007669"/>
    <property type="project" value="UniProtKB-KW"/>
</dbReference>
<dbReference type="FunFam" id="3.40.1190.10:FF:000001">
    <property type="entry name" value="UDP-N-acetylmuramate--L-alanine ligase"/>
    <property type="match status" value="1"/>
</dbReference>
<dbReference type="Gene3D" id="3.90.190.20">
    <property type="entry name" value="Mur ligase, C-terminal domain"/>
    <property type="match status" value="1"/>
</dbReference>
<dbReference type="Gene3D" id="3.40.1190.10">
    <property type="entry name" value="Mur-like, catalytic domain"/>
    <property type="match status" value="1"/>
</dbReference>
<dbReference type="Gene3D" id="3.40.50.720">
    <property type="entry name" value="NAD(P)-binding Rossmann-like Domain"/>
    <property type="match status" value="1"/>
</dbReference>
<dbReference type="HAMAP" id="MF_00046">
    <property type="entry name" value="MurC"/>
    <property type="match status" value="1"/>
</dbReference>
<dbReference type="InterPro" id="IPR036565">
    <property type="entry name" value="Mur-like_cat_sf"/>
</dbReference>
<dbReference type="InterPro" id="IPR004101">
    <property type="entry name" value="Mur_ligase_C"/>
</dbReference>
<dbReference type="InterPro" id="IPR036615">
    <property type="entry name" value="Mur_ligase_C_dom_sf"/>
</dbReference>
<dbReference type="InterPro" id="IPR013221">
    <property type="entry name" value="Mur_ligase_cen"/>
</dbReference>
<dbReference type="InterPro" id="IPR000713">
    <property type="entry name" value="Mur_ligase_N"/>
</dbReference>
<dbReference type="InterPro" id="IPR050061">
    <property type="entry name" value="MurCDEF_pg_biosynth"/>
</dbReference>
<dbReference type="InterPro" id="IPR005758">
    <property type="entry name" value="UDP-N-AcMur_Ala_ligase_MurC"/>
</dbReference>
<dbReference type="NCBIfam" id="TIGR01082">
    <property type="entry name" value="murC"/>
    <property type="match status" value="1"/>
</dbReference>
<dbReference type="PANTHER" id="PTHR43445:SF3">
    <property type="entry name" value="UDP-N-ACETYLMURAMATE--L-ALANINE LIGASE"/>
    <property type="match status" value="1"/>
</dbReference>
<dbReference type="PANTHER" id="PTHR43445">
    <property type="entry name" value="UDP-N-ACETYLMURAMATE--L-ALANINE LIGASE-RELATED"/>
    <property type="match status" value="1"/>
</dbReference>
<dbReference type="Pfam" id="PF01225">
    <property type="entry name" value="Mur_ligase"/>
    <property type="match status" value="1"/>
</dbReference>
<dbReference type="Pfam" id="PF02875">
    <property type="entry name" value="Mur_ligase_C"/>
    <property type="match status" value="1"/>
</dbReference>
<dbReference type="Pfam" id="PF08245">
    <property type="entry name" value="Mur_ligase_M"/>
    <property type="match status" value="1"/>
</dbReference>
<dbReference type="SUPFAM" id="SSF51984">
    <property type="entry name" value="MurCD N-terminal domain"/>
    <property type="match status" value="1"/>
</dbReference>
<dbReference type="SUPFAM" id="SSF53623">
    <property type="entry name" value="MurD-like peptide ligases, catalytic domain"/>
    <property type="match status" value="1"/>
</dbReference>
<dbReference type="SUPFAM" id="SSF53244">
    <property type="entry name" value="MurD-like peptide ligases, peptide-binding domain"/>
    <property type="match status" value="1"/>
</dbReference>
<gene>
    <name evidence="1" type="primary">murC</name>
    <name type="ordered locus">AZOSEA07910</name>
    <name type="ORF">ebA1443</name>
</gene>
<reference key="1">
    <citation type="journal article" date="2005" name="Arch. Microbiol.">
        <title>The genome sequence of an anaerobic aromatic-degrading denitrifying bacterium, strain EbN1.</title>
        <authorList>
            <person name="Rabus R."/>
            <person name="Kube M."/>
            <person name="Heider J."/>
            <person name="Beck A."/>
            <person name="Heitmann K."/>
            <person name="Widdel F."/>
            <person name="Reinhardt R."/>
        </authorList>
    </citation>
    <scope>NUCLEOTIDE SEQUENCE [LARGE SCALE GENOMIC DNA]</scope>
    <source>
        <strain>DSM 19018 / LMG 30748 / EbN1</strain>
    </source>
</reference>
<accession>Q5P6Z7</accession>